<keyword id="KW-1005">Bacterial flagellum biogenesis</keyword>
<keyword id="KW-0143">Chaperone</keyword>
<keyword id="KW-0963">Cytoplasm</keyword>
<keyword id="KW-0810">Translation regulation</keyword>
<sequence>MNLNTKYHGCIEYEEKDVIYFEKGIPGFEELKKFIIFPVEDNDVFSVFHSIEKEDMGIIVISPFNIEKDYEIQLEEEQRKKLELQNEKDALVLNTVTLNSDIDKITVNLRAPIIINIKEKIGEQIIINSDKYKVKHPLFKEEA</sequence>
<feature type="chain" id="PRO_1000138256" description="Flagellar assembly factor FliW">
    <location>
        <begin position="1"/>
        <end position="143"/>
    </location>
</feature>
<gene>
    <name evidence="1" type="primary">fliW</name>
    <name type="ordered locus">CLD_1836</name>
</gene>
<proteinExistence type="inferred from homology"/>
<protein>
    <recommendedName>
        <fullName evidence="1">Flagellar assembly factor FliW</fullName>
    </recommendedName>
</protein>
<name>FLIW_CLOBK</name>
<organism>
    <name type="scientific">Clostridium botulinum (strain Okra / Type B1)</name>
    <dbReference type="NCBI Taxonomy" id="498213"/>
    <lineage>
        <taxon>Bacteria</taxon>
        <taxon>Bacillati</taxon>
        <taxon>Bacillota</taxon>
        <taxon>Clostridia</taxon>
        <taxon>Eubacteriales</taxon>
        <taxon>Clostridiaceae</taxon>
        <taxon>Clostridium</taxon>
    </lineage>
</organism>
<reference key="1">
    <citation type="journal article" date="2007" name="PLoS ONE">
        <title>Analysis of the neurotoxin complex genes in Clostridium botulinum A1-A4 and B1 strains: BoNT/A3, /Ba4 and /B1 clusters are located within plasmids.</title>
        <authorList>
            <person name="Smith T.J."/>
            <person name="Hill K.K."/>
            <person name="Foley B.T."/>
            <person name="Detter J.C."/>
            <person name="Munk A.C."/>
            <person name="Bruce D.C."/>
            <person name="Doggett N.A."/>
            <person name="Smith L.A."/>
            <person name="Marks J.D."/>
            <person name="Xie G."/>
            <person name="Brettin T.S."/>
        </authorList>
    </citation>
    <scope>NUCLEOTIDE SEQUENCE [LARGE SCALE GENOMIC DNA]</scope>
    <source>
        <strain>Okra / Type B1</strain>
    </source>
</reference>
<comment type="function">
    <text evidence="1">Acts as an anti-CsrA protein, binds CsrA and prevents it from repressing translation of its target genes, one of which is flagellin. Binds to flagellin and participates in the assembly of the flagellum.</text>
</comment>
<comment type="subunit">
    <text evidence="1">Interacts with translational regulator CsrA and flagellin(s).</text>
</comment>
<comment type="subcellular location">
    <subcellularLocation>
        <location evidence="1">Cytoplasm</location>
    </subcellularLocation>
</comment>
<comment type="similarity">
    <text evidence="1">Belongs to the FliW family.</text>
</comment>
<accession>B1IK66</accession>
<evidence type="ECO:0000255" key="1">
    <source>
        <dbReference type="HAMAP-Rule" id="MF_01185"/>
    </source>
</evidence>
<dbReference type="EMBL" id="CP000939">
    <property type="protein sequence ID" value="ACA46736.1"/>
    <property type="molecule type" value="Genomic_DNA"/>
</dbReference>
<dbReference type="RefSeq" id="WP_004451384.1">
    <property type="nucleotide sequence ID" value="NC_010516.1"/>
</dbReference>
<dbReference type="SMR" id="B1IK66"/>
<dbReference type="KEGG" id="cbb:CLD_1836"/>
<dbReference type="HOGENOM" id="CLU_112356_0_2_9"/>
<dbReference type="Proteomes" id="UP000008541">
    <property type="component" value="Chromosome"/>
</dbReference>
<dbReference type="GO" id="GO:0005737">
    <property type="term" value="C:cytoplasm"/>
    <property type="evidence" value="ECO:0007669"/>
    <property type="project" value="UniProtKB-SubCell"/>
</dbReference>
<dbReference type="GO" id="GO:0044780">
    <property type="term" value="P:bacterial-type flagellum assembly"/>
    <property type="evidence" value="ECO:0007669"/>
    <property type="project" value="UniProtKB-UniRule"/>
</dbReference>
<dbReference type="GO" id="GO:0006417">
    <property type="term" value="P:regulation of translation"/>
    <property type="evidence" value="ECO:0007669"/>
    <property type="project" value="UniProtKB-KW"/>
</dbReference>
<dbReference type="Gene3D" id="2.30.290.10">
    <property type="entry name" value="BH3618-like"/>
    <property type="match status" value="1"/>
</dbReference>
<dbReference type="HAMAP" id="MF_01185">
    <property type="entry name" value="FliW"/>
    <property type="match status" value="1"/>
</dbReference>
<dbReference type="InterPro" id="IPR003775">
    <property type="entry name" value="Flagellar_assembly_factor_FliW"/>
</dbReference>
<dbReference type="InterPro" id="IPR024046">
    <property type="entry name" value="Flagellar_assmbl_FliW_dom_sf"/>
</dbReference>
<dbReference type="NCBIfam" id="NF009793">
    <property type="entry name" value="PRK13285.1-1"/>
    <property type="match status" value="1"/>
</dbReference>
<dbReference type="PANTHER" id="PTHR39190">
    <property type="entry name" value="FLAGELLAR ASSEMBLY FACTOR FLIW"/>
    <property type="match status" value="1"/>
</dbReference>
<dbReference type="PANTHER" id="PTHR39190:SF1">
    <property type="entry name" value="FLAGELLAR ASSEMBLY FACTOR FLIW"/>
    <property type="match status" value="1"/>
</dbReference>
<dbReference type="Pfam" id="PF02623">
    <property type="entry name" value="FliW"/>
    <property type="match status" value="1"/>
</dbReference>
<dbReference type="SUPFAM" id="SSF141457">
    <property type="entry name" value="BH3618-like"/>
    <property type="match status" value="1"/>
</dbReference>